<proteinExistence type="inferred from homology"/>
<comment type="catalytic activity">
    <reaction evidence="1">
        <text>(S)-4-amino-5-oxopentanoate = 5-aminolevulinate</text>
        <dbReference type="Rhea" id="RHEA:14265"/>
        <dbReference type="ChEBI" id="CHEBI:57501"/>
        <dbReference type="ChEBI" id="CHEBI:356416"/>
        <dbReference type="EC" id="5.4.3.8"/>
    </reaction>
</comment>
<comment type="cofactor">
    <cofactor evidence="1">
        <name>pyridoxal 5'-phosphate</name>
        <dbReference type="ChEBI" id="CHEBI:597326"/>
    </cofactor>
</comment>
<comment type="pathway">
    <text evidence="1">Porphyrin-containing compound metabolism; protoporphyrin-IX biosynthesis; 5-aminolevulinate from L-glutamyl-tRNA(Glu): step 2/2.</text>
</comment>
<comment type="subunit">
    <text evidence="1">Homodimer.</text>
</comment>
<comment type="subcellular location">
    <subcellularLocation>
        <location evidence="1">Cytoplasm</location>
    </subcellularLocation>
</comment>
<comment type="similarity">
    <text evidence="1">Belongs to the class-III pyridoxal-phosphate-dependent aminotransferase family. HemL subfamily.</text>
</comment>
<name>GSA_THEAB</name>
<sequence length="423" mass="46921">MFEIAKKYMPGGVNSPVRAFKSVEMEPIFVKSAKKSKLIDINNKEYIDYIQSWGALILGHAHEEVVEEIKKQAELGTSYGLCHELEVEMARLIVKHIPSVEMVRMVNSGTEAVMSAIRLARAYTNRELIVKFEGCYHGHSDGLLVKAGSGALTFGTPSSKGVTEKIVSNTLVARYNDIESVKELFDKYGENIACVIVEPVAGNMGVVLPKQGFLEGLREITKEYGSLLIFDEVITGFRVSINGAQGYYNVFPDITTLGKIIGGGLPVGAYGGRKEIMELISPQGPVYQAGTLSGNPLTLAAGIKTIKIIENDPDFYSKLDELGKYFEEGIVSALGDFDVKINRIKSMLSFFFSKQEVDSYEKVINSDVEIYKKLFKCLFENGILLPPSPFESLFISSSHTKEDIEKTVYYFEKFSKKLKEGKV</sequence>
<protein>
    <recommendedName>
        <fullName evidence="1">Glutamate-1-semialdehyde 2,1-aminomutase</fullName>
        <shortName evidence="1">GSA</shortName>
        <ecNumber evidence="1">5.4.3.8</ecNumber>
    </recommendedName>
    <alternativeName>
        <fullName evidence="1">Glutamate-1-semialdehyde aminotransferase</fullName>
        <shortName evidence="1">GSA-AT</shortName>
    </alternativeName>
</protein>
<accession>B7IHH3</accession>
<dbReference type="EC" id="5.4.3.8" evidence="1"/>
<dbReference type="EMBL" id="CP001185">
    <property type="protein sequence ID" value="ACJ75537.1"/>
    <property type="molecule type" value="Genomic_DNA"/>
</dbReference>
<dbReference type="RefSeq" id="WP_012579987.1">
    <property type="nucleotide sequence ID" value="NC_011653.1"/>
</dbReference>
<dbReference type="SMR" id="B7IHH3"/>
<dbReference type="STRING" id="484019.THA_1081"/>
<dbReference type="KEGG" id="taf:THA_1081"/>
<dbReference type="eggNOG" id="COG0001">
    <property type="taxonomic scope" value="Bacteria"/>
</dbReference>
<dbReference type="HOGENOM" id="CLU_016922_1_5_0"/>
<dbReference type="OrthoDB" id="9801052at2"/>
<dbReference type="UniPathway" id="UPA00251">
    <property type="reaction ID" value="UER00317"/>
</dbReference>
<dbReference type="Proteomes" id="UP000002453">
    <property type="component" value="Chromosome"/>
</dbReference>
<dbReference type="GO" id="GO:0005737">
    <property type="term" value="C:cytoplasm"/>
    <property type="evidence" value="ECO:0007669"/>
    <property type="project" value="UniProtKB-SubCell"/>
</dbReference>
<dbReference type="GO" id="GO:0042286">
    <property type="term" value="F:glutamate-1-semialdehyde 2,1-aminomutase activity"/>
    <property type="evidence" value="ECO:0007669"/>
    <property type="project" value="UniProtKB-UniRule"/>
</dbReference>
<dbReference type="GO" id="GO:0030170">
    <property type="term" value="F:pyridoxal phosphate binding"/>
    <property type="evidence" value="ECO:0007669"/>
    <property type="project" value="InterPro"/>
</dbReference>
<dbReference type="GO" id="GO:0008483">
    <property type="term" value="F:transaminase activity"/>
    <property type="evidence" value="ECO:0007669"/>
    <property type="project" value="InterPro"/>
</dbReference>
<dbReference type="GO" id="GO:0006782">
    <property type="term" value="P:protoporphyrinogen IX biosynthetic process"/>
    <property type="evidence" value="ECO:0007669"/>
    <property type="project" value="UniProtKB-UniRule"/>
</dbReference>
<dbReference type="CDD" id="cd00610">
    <property type="entry name" value="OAT_like"/>
    <property type="match status" value="1"/>
</dbReference>
<dbReference type="FunFam" id="3.40.640.10:FF:000021">
    <property type="entry name" value="Glutamate-1-semialdehyde 2,1-aminomutase"/>
    <property type="match status" value="1"/>
</dbReference>
<dbReference type="Gene3D" id="3.90.1150.10">
    <property type="entry name" value="Aspartate Aminotransferase, domain 1"/>
    <property type="match status" value="1"/>
</dbReference>
<dbReference type="Gene3D" id="3.40.640.10">
    <property type="entry name" value="Type I PLP-dependent aspartate aminotransferase-like (Major domain)"/>
    <property type="match status" value="1"/>
</dbReference>
<dbReference type="HAMAP" id="MF_00375">
    <property type="entry name" value="HemL_aminotrans_3"/>
    <property type="match status" value="1"/>
</dbReference>
<dbReference type="InterPro" id="IPR004639">
    <property type="entry name" value="4pyrrol_synth_GluAld_NH2Trfase"/>
</dbReference>
<dbReference type="InterPro" id="IPR005814">
    <property type="entry name" value="Aminotrans_3"/>
</dbReference>
<dbReference type="InterPro" id="IPR049704">
    <property type="entry name" value="Aminotrans_3_PPA_site"/>
</dbReference>
<dbReference type="InterPro" id="IPR015424">
    <property type="entry name" value="PyrdxlP-dep_Trfase"/>
</dbReference>
<dbReference type="InterPro" id="IPR015421">
    <property type="entry name" value="PyrdxlP-dep_Trfase_major"/>
</dbReference>
<dbReference type="InterPro" id="IPR015422">
    <property type="entry name" value="PyrdxlP-dep_Trfase_small"/>
</dbReference>
<dbReference type="NCBIfam" id="TIGR00713">
    <property type="entry name" value="hemL"/>
    <property type="match status" value="1"/>
</dbReference>
<dbReference type="NCBIfam" id="NF000818">
    <property type="entry name" value="PRK00062.1"/>
    <property type="match status" value="1"/>
</dbReference>
<dbReference type="PANTHER" id="PTHR43713">
    <property type="entry name" value="GLUTAMATE-1-SEMIALDEHYDE 2,1-AMINOMUTASE"/>
    <property type="match status" value="1"/>
</dbReference>
<dbReference type="PANTHER" id="PTHR43713:SF3">
    <property type="entry name" value="GLUTAMATE-1-SEMIALDEHYDE 2,1-AMINOMUTASE 1, CHLOROPLASTIC-RELATED"/>
    <property type="match status" value="1"/>
</dbReference>
<dbReference type="Pfam" id="PF00202">
    <property type="entry name" value="Aminotran_3"/>
    <property type="match status" value="1"/>
</dbReference>
<dbReference type="SUPFAM" id="SSF53383">
    <property type="entry name" value="PLP-dependent transferases"/>
    <property type="match status" value="1"/>
</dbReference>
<dbReference type="PROSITE" id="PS00600">
    <property type="entry name" value="AA_TRANSFER_CLASS_3"/>
    <property type="match status" value="1"/>
</dbReference>
<gene>
    <name evidence="1" type="primary">hemL</name>
    <name type="ordered locus">THA_1081</name>
</gene>
<evidence type="ECO:0000255" key="1">
    <source>
        <dbReference type="HAMAP-Rule" id="MF_00375"/>
    </source>
</evidence>
<keyword id="KW-0963">Cytoplasm</keyword>
<keyword id="KW-0413">Isomerase</keyword>
<keyword id="KW-0627">Porphyrin biosynthesis</keyword>
<keyword id="KW-0663">Pyridoxal phosphate</keyword>
<keyword id="KW-1185">Reference proteome</keyword>
<reference key="1">
    <citation type="journal article" date="2009" name="J. Bacteriol.">
        <title>The genome of Thermosipho africanus TCF52B: lateral genetic connections to the Firmicutes and Archaea.</title>
        <authorList>
            <person name="Nesboe C.L."/>
            <person name="Bapteste E."/>
            <person name="Curtis B."/>
            <person name="Dahle H."/>
            <person name="Lopez P."/>
            <person name="Macleod D."/>
            <person name="Dlutek M."/>
            <person name="Bowman S."/>
            <person name="Zhaxybayeva O."/>
            <person name="Birkeland N.-K."/>
            <person name="Doolittle W.F."/>
        </authorList>
    </citation>
    <scope>NUCLEOTIDE SEQUENCE [LARGE SCALE GENOMIC DNA]</scope>
    <source>
        <strain>TCF52B</strain>
    </source>
</reference>
<feature type="chain" id="PRO_0000382387" description="Glutamate-1-semialdehyde 2,1-aminomutase">
    <location>
        <begin position="1"/>
        <end position="423"/>
    </location>
</feature>
<feature type="modified residue" description="N6-(pyridoxal phosphate)lysine" evidence="1">
    <location>
        <position position="259"/>
    </location>
</feature>
<organism>
    <name type="scientific">Thermosipho africanus (strain TCF52B)</name>
    <dbReference type="NCBI Taxonomy" id="484019"/>
    <lineage>
        <taxon>Bacteria</taxon>
        <taxon>Thermotogati</taxon>
        <taxon>Thermotogota</taxon>
        <taxon>Thermotogae</taxon>
        <taxon>Thermotogales</taxon>
        <taxon>Fervidobacteriaceae</taxon>
        <taxon>Thermosipho</taxon>
    </lineage>
</organism>